<proteinExistence type="inferred from homology"/>
<reference key="1">
    <citation type="journal article" date="2004" name="Nat. Biotechnol.">
        <title>Complete sequence and comparative genome analysis of the dairy bacterium Streptococcus thermophilus.</title>
        <authorList>
            <person name="Bolotin A."/>
            <person name="Quinquis B."/>
            <person name="Renault P."/>
            <person name="Sorokin A."/>
            <person name="Ehrlich S.D."/>
            <person name="Kulakauskas S."/>
            <person name="Lapidus A."/>
            <person name="Goltsman E."/>
            <person name="Mazur M."/>
            <person name="Pusch G.D."/>
            <person name="Fonstein M."/>
            <person name="Overbeek R."/>
            <person name="Kyprides N."/>
            <person name="Purnelle B."/>
            <person name="Prozzi D."/>
            <person name="Ngui K."/>
            <person name="Masuy D."/>
            <person name="Hancy F."/>
            <person name="Burteau S."/>
            <person name="Boutry M."/>
            <person name="Delcour J."/>
            <person name="Goffeau A."/>
            <person name="Hols P."/>
        </authorList>
    </citation>
    <scope>NUCLEOTIDE SEQUENCE [LARGE SCALE GENOMIC DNA]</scope>
    <source>
        <strain>CNRZ 1066</strain>
    </source>
</reference>
<evidence type="ECO:0000255" key="1">
    <source>
        <dbReference type="HAMAP-Rule" id="MF_01345"/>
    </source>
</evidence>
<evidence type="ECO:0000305" key="2"/>
<comment type="function">
    <text evidence="1">One of the primary rRNA binding proteins, it binds specifically to the 5'-end of 16S ribosomal RNA.</text>
</comment>
<comment type="subunit">
    <text evidence="1">Part of the 30S ribosomal subunit.</text>
</comment>
<comment type="similarity">
    <text evidence="1">Belongs to the universal ribosomal protein uS17 family.</text>
</comment>
<accession>Q5LXS0</accession>
<name>RS17_STRT1</name>
<organism>
    <name type="scientific">Streptococcus thermophilus (strain CNRZ 1066)</name>
    <dbReference type="NCBI Taxonomy" id="299768"/>
    <lineage>
        <taxon>Bacteria</taxon>
        <taxon>Bacillati</taxon>
        <taxon>Bacillota</taxon>
        <taxon>Bacilli</taxon>
        <taxon>Lactobacillales</taxon>
        <taxon>Streptococcaceae</taxon>
        <taxon>Streptococcus</taxon>
    </lineage>
</organism>
<keyword id="KW-0687">Ribonucleoprotein</keyword>
<keyword id="KW-0689">Ribosomal protein</keyword>
<keyword id="KW-0694">RNA-binding</keyword>
<keyword id="KW-0699">rRNA-binding</keyword>
<feature type="chain" id="PRO_0000233582" description="Small ribosomal subunit protein uS17">
    <location>
        <begin position="1"/>
        <end position="86"/>
    </location>
</feature>
<dbReference type="EMBL" id="CP000024">
    <property type="protein sequence ID" value="AAV63438.1"/>
    <property type="molecule type" value="Genomic_DNA"/>
</dbReference>
<dbReference type="RefSeq" id="WP_002944482.1">
    <property type="nucleotide sequence ID" value="NC_006449.1"/>
</dbReference>
<dbReference type="SMR" id="Q5LXS0"/>
<dbReference type="GeneID" id="66899653"/>
<dbReference type="KEGG" id="stc:str1925"/>
<dbReference type="HOGENOM" id="CLU_073626_1_0_9"/>
<dbReference type="GO" id="GO:0022627">
    <property type="term" value="C:cytosolic small ribosomal subunit"/>
    <property type="evidence" value="ECO:0007669"/>
    <property type="project" value="TreeGrafter"/>
</dbReference>
<dbReference type="GO" id="GO:0019843">
    <property type="term" value="F:rRNA binding"/>
    <property type="evidence" value="ECO:0007669"/>
    <property type="project" value="UniProtKB-UniRule"/>
</dbReference>
<dbReference type="GO" id="GO:0003735">
    <property type="term" value="F:structural constituent of ribosome"/>
    <property type="evidence" value="ECO:0007669"/>
    <property type="project" value="InterPro"/>
</dbReference>
<dbReference type="GO" id="GO:0006412">
    <property type="term" value="P:translation"/>
    <property type="evidence" value="ECO:0007669"/>
    <property type="project" value="UniProtKB-UniRule"/>
</dbReference>
<dbReference type="CDD" id="cd00364">
    <property type="entry name" value="Ribosomal_uS17"/>
    <property type="match status" value="1"/>
</dbReference>
<dbReference type="FunFam" id="2.40.50.140:FF:000026">
    <property type="entry name" value="30S ribosomal protein S17"/>
    <property type="match status" value="1"/>
</dbReference>
<dbReference type="Gene3D" id="2.40.50.140">
    <property type="entry name" value="Nucleic acid-binding proteins"/>
    <property type="match status" value="1"/>
</dbReference>
<dbReference type="HAMAP" id="MF_01345_B">
    <property type="entry name" value="Ribosomal_uS17_B"/>
    <property type="match status" value="1"/>
</dbReference>
<dbReference type="InterPro" id="IPR012340">
    <property type="entry name" value="NA-bd_OB-fold"/>
</dbReference>
<dbReference type="InterPro" id="IPR000266">
    <property type="entry name" value="Ribosomal_uS17"/>
</dbReference>
<dbReference type="InterPro" id="IPR019984">
    <property type="entry name" value="Ribosomal_uS17_bact/chlr"/>
</dbReference>
<dbReference type="InterPro" id="IPR019979">
    <property type="entry name" value="Ribosomal_uS17_CS"/>
</dbReference>
<dbReference type="NCBIfam" id="NF004123">
    <property type="entry name" value="PRK05610.1"/>
    <property type="match status" value="1"/>
</dbReference>
<dbReference type="NCBIfam" id="TIGR03635">
    <property type="entry name" value="uS17_bact"/>
    <property type="match status" value="1"/>
</dbReference>
<dbReference type="PANTHER" id="PTHR10744">
    <property type="entry name" value="40S RIBOSOMAL PROTEIN S11 FAMILY MEMBER"/>
    <property type="match status" value="1"/>
</dbReference>
<dbReference type="PANTHER" id="PTHR10744:SF1">
    <property type="entry name" value="SMALL RIBOSOMAL SUBUNIT PROTEIN US17M"/>
    <property type="match status" value="1"/>
</dbReference>
<dbReference type="Pfam" id="PF00366">
    <property type="entry name" value="Ribosomal_S17"/>
    <property type="match status" value="1"/>
</dbReference>
<dbReference type="PRINTS" id="PR00973">
    <property type="entry name" value="RIBOSOMALS17"/>
</dbReference>
<dbReference type="SUPFAM" id="SSF50249">
    <property type="entry name" value="Nucleic acid-binding proteins"/>
    <property type="match status" value="1"/>
</dbReference>
<dbReference type="PROSITE" id="PS00056">
    <property type="entry name" value="RIBOSOMAL_S17"/>
    <property type="match status" value="1"/>
</dbReference>
<sequence>MERNQRKTLVGRVVSDKMDKTITVVVETKRNHPVYGKRINYSKKYKAHDENNVAKEGDIVRIMETRPLSATKHFRLVEVVEEAVII</sequence>
<protein>
    <recommendedName>
        <fullName evidence="1">Small ribosomal subunit protein uS17</fullName>
    </recommendedName>
    <alternativeName>
        <fullName evidence="2">30S ribosomal protein S17</fullName>
    </alternativeName>
</protein>
<gene>
    <name evidence="1" type="primary">rpsQ</name>
    <name type="ordered locus">str1925</name>
</gene>